<gene>
    <name evidence="1" type="primary">isdG</name>
    <name type="ordered locus">BCE33L4287</name>
</gene>
<feature type="chain" id="PRO_0000270073" description="Heme-degrading monooxygenase">
    <location>
        <begin position="1"/>
        <end position="107"/>
    </location>
</feature>
<feature type="domain" description="ABM" evidence="1">
    <location>
        <begin position="2"/>
        <end position="94"/>
    </location>
</feature>
<feature type="binding site" evidence="1">
    <location>
        <position position="6"/>
    </location>
    <ligand>
        <name>Fe cation</name>
        <dbReference type="ChEBI" id="CHEBI:24875"/>
    </ligand>
</feature>
<feature type="binding site" description="axial binding residue" evidence="1">
    <location>
        <position position="76"/>
    </location>
    <ligand>
        <name>heme</name>
        <dbReference type="ChEBI" id="CHEBI:30413"/>
    </ligand>
    <ligandPart>
        <name>Fe</name>
        <dbReference type="ChEBI" id="CHEBI:18248"/>
    </ligandPart>
</feature>
<feature type="site" description="Transition state stabilizer" evidence="1">
    <location>
        <position position="66"/>
    </location>
</feature>
<name>HDOX_BACCZ</name>
<comment type="function">
    <text evidence="1">Allows bacterial pathogens to use the host heme as an iron source. Catalyzes the oxidative degradation of the heme macrocyclic porphyrin ring to the biliverdin in the presence of a suitable electron donor such as ascorbate or NADPH--cytochrome P450 reductase, with subsequent release of free iron.</text>
</comment>
<comment type="catalytic activity">
    <reaction evidence="1">
        <text>heme b + 3 reduced [NADPH--hemoprotein reductase] + 3 O2 = biliverdin IXalpha + CO + Fe(2+) + 3 oxidized [NADPH--hemoprotein reductase] + 3 H2O + H(+)</text>
        <dbReference type="Rhea" id="RHEA:21764"/>
        <dbReference type="Rhea" id="RHEA-COMP:11964"/>
        <dbReference type="Rhea" id="RHEA-COMP:11965"/>
        <dbReference type="ChEBI" id="CHEBI:15377"/>
        <dbReference type="ChEBI" id="CHEBI:15378"/>
        <dbReference type="ChEBI" id="CHEBI:15379"/>
        <dbReference type="ChEBI" id="CHEBI:17245"/>
        <dbReference type="ChEBI" id="CHEBI:29033"/>
        <dbReference type="ChEBI" id="CHEBI:57618"/>
        <dbReference type="ChEBI" id="CHEBI:57991"/>
        <dbReference type="ChEBI" id="CHEBI:58210"/>
        <dbReference type="ChEBI" id="CHEBI:60344"/>
        <dbReference type="EC" id="1.14.14.18"/>
    </reaction>
</comment>
<comment type="subunit">
    <text evidence="1">Homodimer.</text>
</comment>
<comment type="subcellular location">
    <subcellularLocation>
        <location evidence="1">Cytoplasm</location>
    </subcellularLocation>
</comment>
<comment type="similarity">
    <text evidence="1">Belongs to the antibiotic biosynthesis monooxygenase family. Heme-degrading monooxygenase IsdG subfamily.</text>
</comment>
<keyword id="KW-0963">Cytoplasm</keyword>
<keyword id="KW-0349">Heme</keyword>
<keyword id="KW-0408">Iron</keyword>
<keyword id="KW-0479">Metal-binding</keyword>
<keyword id="KW-0503">Monooxygenase</keyword>
<keyword id="KW-0560">Oxidoreductase</keyword>
<organism>
    <name type="scientific">Bacillus cereus (strain ZK / E33L)</name>
    <dbReference type="NCBI Taxonomy" id="288681"/>
    <lineage>
        <taxon>Bacteria</taxon>
        <taxon>Bacillati</taxon>
        <taxon>Bacillota</taxon>
        <taxon>Bacilli</taxon>
        <taxon>Bacillales</taxon>
        <taxon>Bacillaceae</taxon>
        <taxon>Bacillus</taxon>
        <taxon>Bacillus cereus group</taxon>
    </lineage>
</organism>
<accession>Q633Q1</accession>
<protein>
    <recommendedName>
        <fullName evidence="1">Heme-degrading monooxygenase</fullName>
        <ecNumber evidence="1">1.14.14.18</ecNumber>
    </recommendedName>
    <alternativeName>
        <fullName evidence="1">Heme oxygenase</fullName>
    </alternativeName>
    <alternativeName>
        <fullName evidence="1">Iron-regulated surface determinant</fullName>
    </alternativeName>
    <alternativeName>
        <fullName evidence="1">Iron-responsive surface determinant</fullName>
    </alternativeName>
</protein>
<evidence type="ECO:0000255" key="1">
    <source>
        <dbReference type="HAMAP-Rule" id="MF_01272"/>
    </source>
</evidence>
<dbReference type="EC" id="1.14.14.18" evidence="1"/>
<dbReference type="EMBL" id="CP000001">
    <property type="protein sequence ID" value="AAU15982.1"/>
    <property type="molecule type" value="Genomic_DNA"/>
</dbReference>
<dbReference type="RefSeq" id="WP_000587815.1">
    <property type="nucleotide sequence ID" value="NZ_CP009968.1"/>
</dbReference>
<dbReference type="SMR" id="Q633Q1"/>
<dbReference type="GeneID" id="92798870"/>
<dbReference type="KEGG" id="bcz:BCE33L4287"/>
<dbReference type="PATRIC" id="fig|288681.22.peg.1090"/>
<dbReference type="Proteomes" id="UP000002612">
    <property type="component" value="Chromosome"/>
</dbReference>
<dbReference type="GO" id="GO:0005737">
    <property type="term" value="C:cytoplasm"/>
    <property type="evidence" value="ECO:0007669"/>
    <property type="project" value="UniProtKB-SubCell"/>
</dbReference>
<dbReference type="GO" id="GO:0020037">
    <property type="term" value="F:heme binding"/>
    <property type="evidence" value="ECO:0007669"/>
    <property type="project" value="UniProtKB-UniRule"/>
</dbReference>
<dbReference type="GO" id="GO:0004392">
    <property type="term" value="F:heme oxygenase (decyclizing) activity"/>
    <property type="evidence" value="ECO:0007669"/>
    <property type="project" value="UniProtKB-UniRule"/>
</dbReference>
<dbReference type="GO" id="GO:0005506">
    <property type="term" value="F:iron ion binding"/>
    <property type="evidence" value="ECO:0007669"/>
    <property type="project" value="UniProtKB-UniRule"/>
</dbReference>
<dbReference type="GO" id="GO:0042167">
    <property type="term" value="P:heme catabolic process"/>
    <property type="evidence" value="ECO:0007669"/>
    <property type="project" value="UniProtKB-UniRule"/>
</dbReference>
<dbReference type="GO" id="GO:0033212">
    <property type="term" value="P:iron import into cell"/>
    <property type="evidence" value="ECO:0007669"/>
    <property type="project" value="InterPro"/>
</dbReference>
<dbReference type="Gene3D" id="3.30.70.100">
    <property type="match status" value="1"/>
</dbReference>
<dbReference type="HAMAP" id="MF_01272">
    <property type="entry name" value="Heme_degrading_monooxygenase"/>
    <property type="match status" value="1"/>
</dbReference>
<dbReference type="InterPro" id="IPR007138">
    <property type="entry name" value="ABM_dom"/>
</dbReference>
<dbReference type="InterPro" id="IPR011008">
    <property type="entry name" value="Dimeric_a/b-barrel"/>
</dbReference>
<dbReference type="InterPro" id="IPR050404">
    <property type="entry name" value="Heme-degrading_MO"/>
</dbReference>
<dbReference type="InterPro" id="IPR023953">
    <property type="entry name" value="IsdG"/>
</dbReference>
<dbReference type="NCBIfam" id="NF009839">
    <property type="entry name" value="PRK13314.1"/>
    <property type="match status" value="1"/>
</dbReference>
<dbReference type="PANTHER" id="PTHR34474:SF4">
    <property type="entry name" value="HEME OXYGENASE (STAPHYLOBILIN-PRODUCING) 1"/>
    <property type="match status" value="1"/>
</dbReference>
<dbReference type="PANTHER" id="PTHR34474">
    <property type="entry name" value="SIGNAL TRANSDUCTION PROTEIN TRAP"/>
    <property type="match status" value="1"/>
</dbReference>
<dbReference type="Pfam" id="PF03992">
    <property type="entry name" value="ABM"/>
    <property type="match status" value="1"/>
</dbReference>
<dbReference type="SUPFAM" id="SSF54909">
    <property type="entry name" value="Dimeric alpha+beta barrel"/>
    <property type="match status" value="1"/>
</dbReference>
<dbReference type="PROSITE" id="PS51725">
    <property type="entry name" value="ABM"/>
    <property type="match status" value="1"/>
</dbReference>
<reference key="1">
    <citation type="journal article" date="2006" name="J. Bacteriol.">
        <title>Pathogenomic sequence analysis of Bacillus cereus and Bacillus thuringiensis isolates closely related to Bacillus anthracis.</title>
        <authorList>
            <person name="Han C.S."/>
            <person name="Xie G."/>
            <person name="Challacombe J.F."/>
            <person name="Altherr M.R."/>
            <person name="Bhotika S.S."/>
            <person name="Bruce D."/>
            <person name="Campbell C.S."/>
            <person name="Campbell M.L."/>
            <person name="Chen J."/>
            <person name="Chertkov O."/>
            <person name="Cleland C."/>
            <person name="Dimitrijevic M."/>
            <person name="Doggett N.A."/>
            <person name="Fawcett J.J."/>
            <person name="Glavina T."/>
            <person name="Goodwin L.A."/>
            <person name="Hill K.K."/>
            <person name="Hitchcock P."/>
            <person name="Jackson P.J."/>
            <person name="Keim P."/>
            <person name="Kewalramani A.R."/>
            <person name="Longmire J."/>
            <person name="Lucas S."/>
            <person name="Malfatti S."/>
            <person name="McMurry K."/>
            <person name="Meincke L.J."/>
            <person name="Misra M."/>
            <person name="Moseman B.L."/>
            <person name="Mundt M."/>
            <person name="Munk A.C."/>
            <person name="Okinaka R.T."/>
            <person name="Parson-Quintana B."/>
            <person name="Reilly L.P."/>
            <person name="Richardson P."/>
            <person name="Robinson D.L."/>
            <person name="Rubin E."/>
            <person name="Saunders E."/>
            <person name="Tapia R."/>
            <person name="Tesmer J.G."/>
            <person name="Thayer N."/>
            <person name="Thompson L.S."/>
            <person name="Tice H."/>
            <person name="Ticknor L.O."/>
            <person name="Wills P.L."/>
            <person name="Brettin T.S."/>
            <person name="Gilna P."/>
        </authorList>
    </citation>
    <scope>NUCLEOTIDE SEQUENCE [LARGE SCALE GENOMIC DNA]</scope>
    <source>
        <strain>ZK / E33L</strain>
    </source>
</reference>
<proteinExistence type="inferred from homology"/>
<sequence>MIIVTNTAKITKGNGHKLIDRFNKVGQVETMPGFLGLEVLLTQNTVDYDEVTISTRWNAKEDFQGWTKSPAFKAAHSHQGGMPDYILDNKISYYDVKVVRMPMAAAQ</sequence>